<protein>
    <recommendedName>
        <fullName evidence="1">Adenosine deaminase</fullName>
        <ecNumber evidence="1">3.5.4.4</ecNumber>
    </recommendedName>
    <alternativeName>
        <fullName evidence="1">Adenosine aminohydrolase</fullName>
    </alternativeName>
</protein>
<reference key="1">
    <citation type="journal article" date="2011" name="J. Bacteriol.">
        <title>Comparative genomics of 28 Salmonella enterica isolates: evidence for CRISPR-mediated adaptive sublineage evolution.</title>
        <authorList>
            <person name="Fricke W.F."/>
            <person name="Mammel M.K."/>
            <person name="McDermott P.F."/>
            <person name="Tartera C."/>
            <person name="White D.G."/>
            <person name="Leclerc J.E."/>
            <person name="Ravel J."/>
            <person name="Cebula T.A."/>
        </authorList>
    </citation>
    <scope>NUCLEOTIDE SEQUENCE [LARGE SCALE GENOMIC DNA]</scope>
    <source>
        <strain>SL483</strain>
    </source>
</reference>
<evidence type="ECO:0000255" key="1">
    <source>
        <dbReference type="HAMAP-Rule" id="MF_00540"/>
    </source>
</evidence>
<dbReference type="EC" id="3.5.4.4" evidence="1"/>
<dbReference type="EMBL" id="CP001138">
    <property type="protein sequence ID" value="ACH50816.1"/>
    <property type="molecule type" value="Genomic_DNA"/>
</dbReference>
<dbReference type="RefSeq" id="WP_000565565.1">
    <property type="nucleotide sequence ID" value="NC_011149.1"/>
</dbReference>
<dbReference type="SMR" id="B5F6I4"/>
<dbReference type="KEGG" id="sea:SeAg_B1711"/>
<dbReference type="HOGENOM" id="CLU_039228_0_2_6"/>
<dbReference type="Proteomes" id="UP000008819">
    <property type="component" value="Chromosome"/>
</dbReference>
<dbReference type="GO" id="GO:0005829">
    <property type="term" value="C:cytosol"/>
    <property type="evidence" value="ECO:0007669"/>
    <property type="project" value="TreeGrafter"/>
</dbReference>
<dbReference type="GO" id="GO:0046936">
    <property type="term" value="F:2'-deoxyadenosine deaminase activity"/>
    <property type="evidence" value="ECO:0007669"/>
    <property type="project" value="RHEA"/>
</dbReference>
<dbReference type="GO" id="GO:0004000">
    <property type="term" value="F:adenosine deaminase activity"/>
    <property type="evidence" value="ECO:0007669"/>
    <property type="project" value="UniProtKB-UniRule"/>
</dbReference>
<dbReference type="GO" id="GO:0008270">
    <property type="term" value="F:zinc ion binding"/>
    <property type="evidence" value="ECO:0007669"/>
    <property type="project" value="UniProtKB-UniRule"/>
</dbReference>
<dbReference type="GO" id="GO:0006154">
    <property type="term" value="P:adenosine catabolic process"/>
    <property type="evidence" value="ECO:0007669"/>
    <property type="project" value="TreeGrafter"/>
</dbReference>
<dbReference type="GO" id="GO:0043103">
    <property type="term" value="P:hypoxanthine salvage"/>
    <property type="evidence" value="ECO:0007669"/>
    <property type="project" value="TreeGrafter"/>
</dbReference>
<dbReference type="GO" id="GO:0046103">
    <property type="term" value="P:inosine biosynthetic process"/>
    <property type="evidence" value="ECO:0007669"/>
    <property type="project" value="TreeGrafter"/>
</dbReference>
<dbReference type="GO" id="GO:0009117">
    <property type="term" value="P:nucleotide metabolic process"/>
    <property type="evidence" value="ECO:0007669"/>
    <property type="project" value="UniProtKB-KW"/>
</dbReference>
<dbReference type="GO" id="GO:0009168">
    <property type="term" value="P:purine ribonucleoside monophosphate biosynthetic process"/>
    <property type="evidence" value="ECO:0007669"/>
    <property type="project" value="UniProtKB-UniRule"/>
</dbReference>
<dbReference type="CDD" id="cd01320">
    <property type="entry name" value="ADA"/>
    <property type="match status" value="1"/>
</dbReference>
<dbReference type="FunFam" id="3.20.20.140:FF:000009">
    <property type="entry name" value="Adenosine deaminase"/>
    <property type="match status" value="1"/>
</dbReference>
<dbReference type="Gene3D" id="3.20.20.140">
    <property type="entry name" value="Metal-dependent hydrolases"/>
    <property type="match status" value="1"/>
</dbReference>
<dbReference type="HAMAP" id="MF_00540">
    <property type="entry name" value="A_deaminase"/>
    <property type="match status" value="1"/>
</dbReference>
<dbReference type="InterPro" id="IPR006650">
    <property type="entry name" value="A/AMP_deam_AS"/>
</dbReference>
<dbReference type="InterPro" id="IPR028893">
    <property type="entry name" value="A_deaminase"/>
</dbReference>
<dbReference type="InterPro" id="IPR001365">
    <property type="entry name" value="A_deaminase_dom"/>
</dbReference>
<dbReference type="InterPro" id="IPR006330">
    <property type="entry name" value="Ado/ade_deaminase"/>
</dbReference>
<dbReference type="InterPro" id="IPR032466">
    <property type="entry name" value="Metal_Hydrolase"/>
</dbReference>
<dbReference type="NCBIfam" id="TIGR01430">
    <property type="entry name" value="aden_deam"/>
    <property type="match status" value="1"/>
</dbReference>
<dbReference type="NCBIfam" id="NF006846">
    <property type="entry name" value="PRK09358.1-1"/>
    <property type="match status" value="1"/>
</dbReference>
<dbReference type="PANTHER" id="PTHR11409">
    <property type="entry name" value="ADENOSINE DEAMINASE"/>
    <property type="match status" value="1"/>
</dbReference>
<dbReference type="PANTHER" id="PTHR11409:SF43">
    <property type="entry name" value="ADENOSINE DEAMINASE"/>
    <property type="match status" value="1"/>
</dbReference>
<dbReference type="Pfam" id="PF00962">
    <property type="entry name" value="A_deaminase"/>
    <property type="match status" value="1"/>
</dbReference>
<dbReference type="SUPFAM" id="SSF51556">
    <property type="entry name" value="Metallo-dependent hydrolases"/>
    <property type="match status" value="1"/>
</dbReference>
<dbReference type="PROSITE" id="PS00485">
    <property type="entry name" value="A_DEAMINASE"/>
    <property type="match status" value="1"/>
</dbReference>
<name>ADD_SALA4</name>
<organism>
    <name type="scientific">Salmonella agona (strain SL483)</name>
    <dbReference type="NCBI Taxonomy" id="454166"/>
    <lineage>
        <taxon>Bacteria</taxon>
        <taxon>Pseudomonadati</taxon>
        <taxon>Pseudomonadota</taxon>
        <taxon>Gammaproteobacteria</taxon>
        <taxon>Enterobacterales</taxon>
        <taxon>Enterobacteriaceae</taxon>
        <taxon>Salmonella</taxon>
    </lineage>
</organism>
<sequence>MIDITLPLTDIHRHLDGNIRAQTILDLGRQFNIALPAQTLETLIPHVQVTSTEPDLVSFLTKLDWGVKVLASLDACRRVAFENIEDAARNGLHYVELRFSPGYMAMAHQLPIAGVVEAVIDGVRDGCNTFGVEARLIGIMSRTFGEAACLQELDALLAHREKITALDLAGDELGFPGSLFLSHFNRARDAGWHITVHAGEAAGPESIWQAIRELGAERIGHGVKAVEDRALMDFLAQQRIGIESCLTSNIQTSTVASLADHPLKTFLEHGVLASLNTDDPAVQGVDIIHEYHVAAPAAGLSREQIRQAQINGLEIAFLSDGEKRALREKVAAA</sequence>
<comment type="function">
    <text evidence="1">Catalyzes the hydrolytic deamination of adenosine and 2-deoxyadenosine.</text>
</comment>
<comment type="catalytic activity">
    <reaction evidence="1">
        <text>adenosine + H2O + H(+) = inosine + NH4(+)</text>
        <dbReference type="Rhea" id="RHEA:24408"/>
        <dbReference type="ChEBI" id="CHEBI:15377"/>
        <dbReference type="ChEBI" id="CHEBI:15378"/>
        <dbReference type="ChEBI" id="CHEBI:16335"/>
        <dbReference type="ChEBI" id="CHEBI:17596"/>
        <dbReference type="ChEBI" id="CHEBI:28938"/>
        <dbReference type="EC" id="3.5.4.4"/>
    </reaction>
    <physiologicalReaction direction="left-to-right" evidence="1">
        <dbReference type="Rhea" id="RHEA:24409"/>
    </physiologicalReaction>
</comment>
<comment type="catalytic activity">
    <reaction evidence="1">
        <text>2'-deoxyadenosine + H2O + H(+) = 2'-deoxyinosine + NH4(+)</text>
        <dbReference type="Rhea" id="RHEA:28190"/>
        <dbReference type="ChEBI" id="CHEBI:15377"/>
        <dbReference type="ChEBI" id="CHEBI:15378"/>
        <dbReference type="ChEBI" id="CHEBI:17256"/>
        <dbReference type="ChEBI" id="CHEBI:28938"/>
        <dbReference type="ChEBI" id="CHEBI:28997"/>
        <dbReference type="EC" id="3.5.4.4"/>
    </reaction>
    <physiologicalReaction direction="left-to-right" evidence="1">
        <dbReference type="Rhea" id="RHEA:28191"/>
    </physiologicalReaction>
</comment>
<comment type="cofactor">
    <cofactor evidence="1">
        <name>Zn(2+)</name>
        <dbReference type="ChEBI" id="CHEBI:29105"/>
    </cofactor>
    <text evidence="1">Binds 1 zinc ion per subunit.</text>
</comment>
<comment type="similarity">
    <text evidence="1">Belongs to the metallo-dependent hydrolases superfamily. Adenosine and AMP deaminases family. Adenosine deaminase subfamily.</text>
</comment>
<gene>
    <name evidence="1" type="primary">add</name>
    <name type="ordered locus">SeAg_B1711</name>
</gene>
<accession>B5F6I4</accession>
<feature type="chain" id="PRO_1000128860" description="Adenosine deaminase">
    <location>
        <begin position="1"/>
        <end position="333"/>
    </location>
</feature>
<feature type="active site" description="Proton donor" evidence="1">
    <location>
        <position position="200"/>
    </location>
</feature>
<feature type="binding site" evidence="1">
    <location>
        <position position="12"/>
    </location>
    <ligand>
        <name>Zn(2+)</name>
        <dbReference type="ChEBI" id="CHEBI:29105"/>
        <note>catalytic</note>
    </ligand>
</feature>
<feature type="binding site" evidence="1">
    <location>
        <position position="14"/>
    </location>
    <ligand>
        <name>substrate</name>
    </ligand>
</feature>
<feature type="binding site" evidence="1">
    <location>
        <position position="14"/>
    </location>
    <ligand>
        <name>Zn(2+)</name>
        <dbReference type="ChEBI" id="CHEBI:29105"/>
        <note>catalytic</note>
    </ligand>
</feature>
<feature type="binding site" evidence="1">
    <location>
        <position position="16"/>
    </location>
    <ligand>
        <name>substrate</name>
    </ligand>
</feature>
<feature type="binding site" evidence="1">
    <location>
        <position position="170"/>
    </location>
    <ligand>
        <name>substrate</name>
    </ligand>
</feature>
<feature type="binding site" evidence="1">
    <location>
        <position position="197"/>
    </location>
    <ligand>
        <name>Zn(2+)</name>
        <dbReference type="ChEBI" id="CHEBI:29105"/>
        <note>catalytic</note>
    </ligand>
</feature>
<feature type="binding site" evidence="1">
    <location>
        <position position="278"/>
    </location>
    <ligand>
        <name>Zn(2+)</name>
        <dbReference type="ChEBI" id="CHEBI:29105"/>
        <note>catalytic</note>
    </ligand>
</feature>
<feature type="binding site" evidence="1">
    <location>
        <position position="279"/>
    </location>
    <ligand>
        <name>substrate</name>
    </ligand>
</feature>
<feature type="site" description="Important for catalytic activity" evidence="1">
    <location>
        <position position="221"/>
    </location>
</feature>
<proteinExistence type="inferred from homology"/>
<keyword id="KW-0378">Hydrolase</keyword>
<keyword id="KW-0479">Metal-binding</keyword>
<keyword id="KW-0546">Nucleotide metabolism</keyword>
<keyword id="KW-0862">Zinc</keyword>